<gene>
    <name type="primary">MC1R</name>
</gene>
<protein>
    <recommendedName>
        <fullName>Melanocyte-stimulating hormone receptor</fullName>
        <shortName>MSH-R</shortName>
    </recommendedName>
    <alternativeName>
        <fullName>Melanocortin receptor 1</fullName>
        <shortName>MC1-R</shortName>
    </alternativeName>
</protein>
<dbReference type="EMBL" id="X90844">
    <property type="protein sequence ID" value="CAA62349.1"/>
    <property type="molecule type" value="Genomic_DNA"/>
</dbReference>
<dbReference type="PIR" id="T12055">
    <property type="entry name" value="T12055"/>
</dbReference>
<dbReference type="SMR" id="Q29154"/>
<dbReference type="STRING" id="9627.ENSVVUP00000005692"/>
<dbReference type="GlyCosmos" id="Q29154">
    <property type="glycosylation" value="1 site, No reported glycans"/>
</dbReference>
<dbReference type="Proteomes" id="UP000286640">
    <property type="component" value="Unplaced"/>
</dbReference>
<dbReference type="GO" id="GO:0005886">
    <property type="term" value="C:plasma membrane"/>
    <property type="evidence" value="ECO:0000250"/>
    <property type="project" value="UniProtKB"/>
</dbReference>
<dbReference type="GO" id="GO:0004980">
    <property type="term" value="F:melanocyte-stimulating hormone receptor activity"/>
    <property type="evidence" value="ECO:0007669"/>
    <property type="project" value="InterPro"/>
</dbReference>
<dbReference type="FunFam" id="1.20.1070.10:FF:000211">
    <property type="entry name" value="Melanocyte-stimulating hormone receptor"/>
    <property type="match status" value="1"/>
</dbReference>
<dbReference type="Gene3D" id="1.20.1070.10">
    <property type="entry name" value="Rhodopsin 7-helix transmembrane proteins"/>
    <property type="match status" value="1"/>
</dbReference>
<dbReference type="InterPro" id="IPR000276">
    <property type="entry name" value="GPCR_Rhodpsn"/>
</dbReference>
<dbReference type="InterPro" id="IPR017452">
    <property type="entry name" value="GPCR_Rhodpsn_7TM"/>
</dbReference>
<dbReference type="InterPro" id="IPR001671">
    <property type="entry name" value="Melcrt_ACTH_rcpt"/>
</dbReference>
<dbReference type="InterPro" id="IPR000761">
    <property type="entry name" value="MSH_rcpt"/>
</dbReference>
<dbReference type="PANTHER" id="PTHR22750">
    <property type="entry name" value="G-PROTEIN COUPLED RECEPTOR"/>
    <property type="match status" value="1"/>
</dbReference>
<dbReference type="Pfam" id="PF00001">
    <property type="entry name" value="7tm_1"/>
    <property type="match status" value="1"/>
</dbReference>
<dbReference type="PRINTS" id="PR00237">
    <property type="entry name" value="GPCRRHODOPSN"/>
</dbReference>
<dbReference type="PRINTS" id="PR00534">
    <property type="entry name" value="MCRFAMILY"/>
</dbReference>
<dbReference type="PRINTS" id="PR00536">
    <property type="entry name" value="MELNOCYTESHR"/>
</dbReference>
<dbReference type="SMART" id="SM01381">
    <property type="entry name" value="7TM_GPCR_Srsx"/>
    <property type="match status" value="1"/>
</dbReference>
<dbReference type="SUPFAM" id="SSF81321">
    <property type="entry name" value="Family A G protein-coupled receptor-like"/>
    <property type="match status" value="1"/>
</dbReference>
<dbReference type="PROSITE" id="PS00237">
    <property type="entry name" value="G_PROTEIN_RECEP_F1_1"/>
    <property type="match status" value="1"/>
</dbReference>
<dbReference type="PROSITE" id="PS50262">
    <property type="entry name" value="G_PROTEIN_RECEP_F1_2"/>
    <property type="match status" value="1"/>
</dbReference>
<keyword id="KW-1003">Cell membrane</keyword>
<keyword id="KW-0297">G-protein coupled receptor</keyword>
<keyword id="KW-0325">Glycoprotein</keyword>
<keyword id="KW-0449">Lipoprotein</keyword>
<keyword id="KW-0472">Membrane</keyword>
<keyword id="KW-0564">Palmitate</keyword>
<keyword id="KW-0675">Receptor</keyword>
<keyword id="KW-1185">Reference proteome</keyword>
<keyword id="KW-0807">Transducer</keyword>
<keyword id="KW-0812">Transmembrane</keyword>
<keyword id="KW-1133">Transmembrane helix</keyword>
<evidence type="ECO:0000250" key="1">
    <source>
        <dbReference type="UniProtKB" id="Q01726"/>
    </source>
</evidence>
<evidence type="ECO:0000255" key="2"/>
<evidence type="ECO:0000255" key="3">
    <source>
        <dbReference type="PROSITE-ProRule" id="PRU00521"/>
    </source>
</evidence>
<evidence type="ECO:0000256" key="4">
    <source>
        <dbReference type="SAM" id="MobiDB-lite"/>
    </source>
</evidence>
<evidence type="ECO:0000269" key="5">
    <source>
    </source>
</evidence>
<reference key="1">
    <citation type="journal article" date="1997" name="Nat. Genet.">
        <title>A non-epistatic interaction of agouti and extension in the fox, Vulpes vulpes.</title>
        <authorList>
            <person name="Vage D.I."/>
            <person name="Lu D."/>
            <person name="Klungland J."/>
            <person name="Lien S."/>
            <person name="Adalsteinsson S."/>
            <person name="Cone R.D."/>
        </authorList>
    </citation>
    <scope>NUCLEOTIDE SEQUENCE [GENOMIC DNA]</scope>
</reference>
<feature type="chain" id="PRO_0000069858" description="Melanocyte-stimulating hormone receptor">
    <location>
        <begin position="1"/>
        <end position="317"/>
    </location>
</feature>
<feature type="topological domain" description="Extracellular" evidence="2">
    <location>
        <begin position="1"/>
        <end position="37"/>
    </location>
</feature>
<feature type="transmembrane region" description="Helical; Name=1" evidence="2">
    <location>
        <begin position="38"/>
        <end position="63"/>
    </location>
</feature>
<feature type="topological domain" description="Cytoplasmic" evidence="2">
    <location>
        <begin position="64"/>
        <end position="72"/>
    </location>
</feature>
<feature type="transmembrane region" description="Helical; Name=2" evidence="2">
    <location>
        <begin position="73"/>
        <end position="93"/>
    </location>
</feature>
<feature type="topological domain" description="Extracellular" evidence="2">
    <location>
        <begin position="94"/>
        <end position="118"/>
    </location>
</feature>
<feature type="transmembrane region" description="Helical; Name=3" evidence="2">
    <location>
        <begin position="119"/>
        <end position="140"/>
    </location>
</feature>
<feature type="topological domain" description="Cytoplasmic" evidence="2">
    <location>
        <begin position="141"/>
        <end position="163"/>
    </location>
</feature>
<feature type="transmembrane region" description="Helical; Name=4" evidence="2">
    <location>
        <begin position="164"/>
        <end position="183"/>
    </location>
</feature>
<feature type="topological domain" description="Extracellular" evidence="2">
    <location>
        <begin position="184"/>
        <end position="191"/>
    </location>
</feature>
<feature type="transmembrane region" description="Helical; Name=5" evidence="2">
    <location>
        <begin position="192"/>
        <end position="211"/>
    </location>
</feature>
<feature type="topological domain" description="Cytoplasmic" evidence="2">
    <location>
        <begin position="212"/>
        <end position="240"/>
    </location>
</feature>
<feature type="transmembrane region" description="Helical; Name=6" evidence="2">
    <location>
        <begin position="241"/>
        <end position="266"/>
    </location>
</feature>
<feature type="topological domain" description="Extracellular" evidence="2">
    <location>
        <begin position="267"/>
        <end position="279"/>
    </location>
</feature>
<feature type="transmembrane region" description="Helical; Name=7" evidence="2">
    <location>
        <begin position="280"/>
        <end position="300"/>
    </location>
</feature>
<feature type="topological domain" description="Cytoplasmic" evidence="2">
    <location>
        <begin position="301"/>
        <end position="317"/>
    </location>
</feature>
<feature type="region of interest" description="Disordered" evidence="4">
    <location>
        <begin position="1"/>
        <end position="23"/>
    </location>
</feature>
<feature type="lipid moiety-binding region" description="S-palmitoyl cysteine" evidence="2">
    <location>
        <position position="315"/>
    </location>
</feature>
<feature type="glycosylation site" description="N-linked (GlcNAc...) asparagine" evidence="2">
    <location>
        <position position="29"/>
    </location>
</feature>
<feature type="sequence variant" description="In allele Alaska Silver (EA); darkly pigmented animals; constitutively activated.">
    <original>C</original>
    <variation>R</variation>
    <location>
        <position position="125"/>
    </location>
</feature>
<comment type="function">
    <text evidence="1">Receptor for MSH (alpha, beta and gamma) and ACTH. The activity of this receptor is mediated by G proteins which activate adenylate cyclase. Mediates melanogenesis, the production of eumelanin (black/brown) and phaeomelanin (red/yellow), via regulation of cAMP signaling in melanocytes.</text>
</comment>
<comment type="subunit">
    <text evidence="1">Interacts with MGRN1, but does not undergo MGRN1-mediated ubiquitination; this interaction competes with GNAS-binding and thus inhibits agonist-induced cAMP production. Interacts with OPN3; the interaction results in a decrease in MC1R-mediated cAMP signaling and ultimately a decrease in melanin production in melanocytes.</text>
</comment>
<comment type="subcellular location">
    <subcellularLocation>
        <location evidence="1">Cell membrane</location>
        <topology evidence="2">Multi-pass membrane protein</topology>
    </subcellularLocation>
</comment>
<comment type="polymorphism">
    <text evidence="5">The coat color of the Alaska silver fox is produced by a constitutively active mutant of this receptor.</text>
</comment>
<comment type="similarity">
    <text evidence="3">Belongs to the G-protein coupled receptor 1 family.</text>
</comment>
<sequence>MSGQGPQRRLLGSPNATSPTTPHFKLAANQTGPRCLEVSIPNGLFLSLGLVSVVENVLVVAAIAKNRNLHSPMYYFIGCLAVSDLLVSVTNVLETAVMLLVEAGALAAQAAVVQQLDDIIDVLICGSMVSSLCFLGAIAVDRYLSIFYALRYHSIVTLPRAWRAISAIWVASVLSSTLFIAYYNHTAVLLCLVSFFVAMLVLMAVLYVHMLARARQHARGIARLRKRQHSVHQGFGLKGAATLTILLGIFFLCWGPFFLHLSLMVLCPQHPICGCVFQNFNLFLTLIICNSIIDPFIYAFRSQELRKTLQEVVLCSW</sequence>
<organism>
    <name type="scientific">Vulpes vulpes</name>
    <name type="common">Red fox</name>
    <dbReference type="NCBI Taxonomy" id="9627"/>
    <lineage>
        <taxon>Eukaryota</taxon>
        <taxon>Metazoa</taxon>
        <taxon>Chordata</taxon>
        <taxon>Craniata</taxon>
        <taxon>Vertebrata</taxon>
        <taxon>Euteleostomi</taxon>
        <taxon>Mammalia</taxon>
        <taxon>Eutheria</taxon>
        <taxon>Laurasiatheria</taxon>
        <taxon>Carnivora</taxon>
        <taxon>Caniformia</taxon>
        <taxon>Canidae</taxon>
        <taxon>Vulpes</taxon>
    </lineage>
</organism>
<name>MSHR_VULVU</name>
<accession>Q29154</accession>
<accession>P79328</accession>
<proteinExistence type="inferred from homology"/>